<keyword id="KW-0574">Periplasm</keyword>
<keyword id="KW-0732">Signal</keyword>
<dbReference type="EMBL" id="CP000446">
    <property type="protein sequence ID" value="ABI38903.1"/>
    <property type="molecule type" value="Genomic_DNA"/>
</dbReference>
<dbReference type="RefSeq" id="WP_011622600.1">
    <property type="nucleotide sequence ID" value="NC_008321.1"/>
</dbReference>
<dbReference type="SMR" id="Q0HJ64"/>
<dbReference type="KEGG" id="she:Shewmr4_1829"/>
<dbReference type="HOGENOM" id="CLU_023403_2_0_6"/>
<dbReference type="UniPathway" id="UPA00637"/>
<dbReference type="GO" id="GO:0030288">
    <property type="term" value="C:outer membrane-bounded periplasmic space"/>
    <property type="evidence" value="ECO:0007669"/>
    <property type="project" value="TreeGrafter"/>
</dbReference>
<dbReference type="GO" id="GO:0030246">
    <property type="term" value="F:carbohydrate binding"/>
    <property type="evidence" value="ECO:0007669"/>
    <property type="project" value="InterPro"/>
</dbReference>
<dbReference type="GO" id="GO:0003824">
    <property type="term" value="F:catalytic activity"/>
    <property type="evidence" value="ECO:0007669"/>
    <property type="project" value="InterPro"/>
</dbReference>
<dbReference type="GO" id="GO:0051274">
    <property type="term" value="P:beta-glucan biosynthetic process"/>
    <property type="evidence" value="ECO:0007669"/>
    <property type="project" value="TreeGrafter"/>
</dbReference>
<dbReference type="FunFam" id="2.60.40.10:FF:001915">
    <property type="entry name" value="Glucans biosynthesis protein G"/>
    <property type="match status" value="1"/>
</dbReference>
<dbReference type="FunFam" id="2.70.98.10:FF:000001">
    <property type="entry name" value="Glucans biosynthesis protein G"/>
    <property type="match status" value="1"/>
</dbReference>
<dbReference type="Gene3D" id="2.70.98.10">
    <property type="match status" value="1"/>
</dbReference>
<dbReference type="Gene3D" id="2.60.40.10">
    <property type="entry name" value="Immunoglobulins"/>
    <property type="match status" value="1"/>
</dbReference>
<dbReference type="HAMAP" id="MF_01069">
    <property type="entry name" value="MdoG_OpgG"/>
    <property type="match status" value="1"/>
</dbReference>
<dbReference type="InterPro" id="IPR011013">
    <property type="entry name" value="Gal_mutarotase_sf_dom"/>
</dbReference>
<dbReference type="InterPro" id="IPR014718">
    <property type="entry name" value="GH-type_carb-bd"/>
</dbReference>
<dbReference type="InterPro" id="IPR014438">
    <property type="entry name" value="Glucan_biosyn_MdoG/MdoD"/>
</dbReference>
<dbReference type="InterPro" id="IPR007444">
    <property type="entry name" value="Glucan_biosyn_MdoG_C"/>
</dbReference>
<dbReference type="InterPro" id="IPR013783">
    <property type="entry name" value="Ig-like_fold"/>
</dbReference>
<dbReference type="InterPro" id="IPR014756">
    <property type="entry name" value="Ig_E-set"/>
</dbReference>
<dbReference type="InterPro" id="IPR023704">
    <property type="entry name" value="MdoG_OpgG"/>
</dbReference>
<dbReference type="PANTHER" id="PTHR30504">
    <property type="entry name" value="GLUCANS BIOSYNTHESIS PROTEIN"/>
    <property type="match status" value="1"/>
</dbReference>
<dbReference type="PANTHER" id="PTHR30504:SF2">
    <property type="entry name" value="GLUCANS BIOSYNTHESIS PROTEIN G"/>
    <property type="match status" value="1"/>
</dbReference>
<dbReference type="Pfam" id="PF04349">
    <property type="entry name" value="MdoG"/>
    <property type="match status" value="1"/>
</dbReference>
<dbReference type="PIRSF" id="PIRSF006281">
    <property type="entry name" value="MdoG"/>
    <property type="match status" value="1"/>
</dbReference>
<dbReference type="SUPFAM" id="SSF81296">
    <property type="entry name" value="E set domains"/>
    <property type="match status" value="1"/>
</dbReference>
<dbReference type="SUPFAM" id="SSF74650">
    <property type="entry name" value="Galactose mutarotase-like"/>
    <property type="match status" value="1"/>
</dbReference>
<name>OPGG_SHESM</name>
<comment type="function">
    <text evidence="1">Involved in the biosynthesis of osmoregulated periplasmic glucans (OPGs).</text>
</comment>
<comment type="pathway">
    <text evidence="1">Glycan metabolism; osmoregulated periplasmic glucan (OPG) biosynthesis.</text>
</comment>
<comment type="subcellular location">
    <subcellularLocation>
        <location evidence="1">Periplasm</location>
    </subcellularLocation>
</comment>
<comment type="similarity">
    <text evidence="1">Belongs to the OpgD/OpgG family.</text>
</comment>
<gene>
    <name evidence="1" type="primary">opgG</name>
    <name type="ordered locus">Shewmr4_1829</name>
</gene>
<proteinExistence type="inferred from homology"/>
<feature type="signal peptide" evidence="1">
    <location>
        <begin position="1"/>
        <end position="34"/>
    </location>
</feature>
<feature type="chain" id="PRO_5000129806" description="Glucans biosynthesis protein G">
    <location>
        <begin position="35"/>
        <end position="545"/>
    </location>
</feature>
<feature type="region of interest" description="Disordered" evidence="2">
    <location>
        <begin position="38"/>
        <end position="60"/>
    </location>
</feature>
<reference key="1">
    <citation type="submission" date="2006-08" db="EMBL/GenBank/DDBJ databases">
        <title>Complete sequence of Shewanella sp. MR-4.</title>
        <authorList>
            <consortium name="US DOE Joint Genome Institute"/>
            <person name="Copeland A."/>
            <person name="Lucas S."/>
            <person name="Lapidus A."/>
            <person name="Barry K."/>
            <person name="Detter J.C."/>
            <person name="Glavina del Rio T."/>
            <person name="Hammon N."/>
            <person name="Israni S."/>
            <person name="Dalin E."/>
            <person name="Tice H."/>
            <person name="Pitluck S."/>
            <person name="Kiss H."/>
            <person name="Brettin T."/>
            <person name="Bruce D."/>
            <person name="Han C."/>
            <person name="Tapia R."/>
            <person name="Gilna P."/>
            <person name="Schmutz J."/>
            <person name="Larimer F."/>
            <person name="Land M."/>
            <person name="Hauser L."/>
            <person name="Kyrpides N."/>
            <person name="Mikhailova N."/>
            <person name="Nealson K."/>
            <person name="Konstantinidis K."/>
            <person name="Klappenbach J."/>
            <person name="Tiedje J."/>
            <person name="Richardson P."/>
        </authorList>
    </citation>
    <scope>NUCLEOTIDE SEQUENCE [LARGE SCALE GENOMIC DNA]</scope>
    <source>
        <strain>MR-4</strain>
    </source>
</reference>
<protein>
    <recommendedName>
        <fullName evidence="1">Glucans biosynthesis protein G</fullName>
    </recommendedName>
</protein>
<organism>
    <name type="scientific">Shewanella sp. (strain MR-4)</name>
    <dbReference type="NCBI Taxonomy" id="60480"/>
    <lineage>
        <taxon>Bacteria</taxon>
        <taxon>Pseudomonadati</taxon>
        <taxon>Pseudomonadota</taxon>
        <taxon>Gammaproteobacteria</taxon>
        <taxon>Alteromonadales</taxon>
        <taxon>Shewanellaceae</taxon>
        <taxon>Shewanella</taxon>
    </lineage>
</organism>
<accession>Q0HJ64</accession>
<sequence length="545" mass="60830">MVSLLRCQSFKPSSSLICSLALSAAFALSSSAFAEETKPAENKPATPVVSPPKATAQPANKNQVRFTKTGTFDGDSVVKLARKLASKPYVVLKDPLPAGLAKLSYDEYRDIRFNPVSSIWRDQGLPFQMQMFHRGFYFQDLIEIAIVEANQATHLAYEPKYFTAGEVITQALPNDDIGYSGFRIHNQLNTNGVYDELMVFQGASYFRALGKGNSYGLSARGLALKTADPEGEEFPIFRAFWVERPSYDSNLIVVHALLDSPSVAGAYRFSVRPGDNTQIDVEATLFPRVELSKVGLAPSTSMFLHSLNGRHDTDDFRPEVHDSDGLLMFNGRGEHLWRPLANPRQLQVSAFSDNSPQGFGLIQRERNYASYQDLEAHYERRPSLWIEPVGNWGQGAVVLTEIPTESEIHDNIVSFWKPRQPIPAGSEYHFAYRMSWGDEPVAKTNSVVVSRTASGRADIAKATPRRLFVVDYHLNGAMPDELPLAKVESSGGVIANVVIARNAANNGYRLAFELEPEDKELIELRAELKFSTPRQVETWLYRWTL</sequence>
<evidence type="ECO:0000255" key="1">
    <source>
        <dbReference type="HAMAP-Rule" id="MF_01069"/>
    </source>
</evidence>
<evidence type="ECO:0000256" key="2">
    <source>
        <dbReference type="SAM" id="MobiDB-lite"/>
    </source>
</evidence>